<proteinExistence type="inferred from homology"/>
<keyword id="KW-0963">Cytoplasm</keyword>
<keyword id="KW-0324">Glycolysis</keyword>
<keyword id="KW-0456">Lyase</keyword>
<keyword id="KW-0460">Magnesium</keyword>
<keyword id="KW-0479">Metal-binding</keyword>
<keyword id="KW-1185">Reference proteome</keyword>
<keyword id="KW-0964">Secreted</keyword>
<comment type="function">
    <text evidence="1">Catalyzes the reversible conversion of 2-phosphoglycerate (2-PG) into phosphoenolpyruvate (PEP). It is essential for the degradation of carbohydrates via glycolysis.</text>
</comment>
<comment type="catalytic activity">
    <reaction evidence="1">
        <text>(2R)-2-phosphoglycerate = phosphoenolpyruvate + H2O</text>
        <dbReference type="Rhea" id="RHEA:10164"/>
        <dbReference type="ChEBI" id="CHEBI:15377"/>
        <dbReference type="ChEBI" id="CHEBI:58289"/>
        <dbReference type="ChEBI" id="CHEBI:58702"/>
        <dbReference type="EC" id="4.2.1.11"/>
    </reaction>
</comment>
<comment type="cofactor">
    <cofactor evidence="1">
        <name>Mg(2+)</name>
        <dbReference type="ChEBI" id="CHEBI:18420"/>
    </cofactor>
    <text evidence="1">Binds a second Mg(2+) ion via substrate during catalysis.</text>
</comment>
<comment type="pathway">
    <text evidence="1">Carbohydrate degradation; glycolysis; pyruvate from D-glyceraldehyde 3-phosphate: step 4/5.</text>
</comment>
<comment type="subcellular location">
    <subcellularLocation>
        <location evidence="1">Cytoplasm</location>
    </subcellularLocation>
    <subcellularLocation>
        <location evidence="1">Secreted</location>
    </subcellularLocation>
    <subcellularLocation>
        <location evidence="1">Cell surface</location>
    </subcellularLocation>
    <text evidence="1">Fractions of enolase are present in both the cytoplasm and on the cell surface.</text>
</comment>
<comment type="similarity">
    <text evidence="1">Belongs to the enolase family.</text>
</comment>
<reference key="1">
    <citation type="journal article" date="2009" name="Proc. Natl. Acad. Sci. U.S.A.">
        <title>Characterizing a model human gut microbiota composed of members of its two dominant bacterial phyla.</title>
        <authorList>
            <person name="Mahowald M.A."/>
            <person name="Rey F.E."/>
            <person name="Seedorf H."/>
            <person name="Turnbaugh P.J."/>
            <person name="Fulton R.S."/>
            <person name="Wollam A."/>
            <person name="Shah N."/>
            <person name="Wang C."/>
            <person name="Magrini V."/>
            <person name="Wilson R.K."/>
            <person name="Cantarel B.L."/>
            <person name="Coutinho P.M."/>
            <person name="Henrissat B."/>
            <person name="Crock L.W."/>
            <person name="Russell A."/>
            <person name="Verberkmoes N.C."/>
            <person name="Hettich R.L."/>
            <person name="Gordon J.I."/>
        </authorList>
    </citation>
    <scope>NUCLEOTIDE SEQUENCE [LARGE SCALE GENOMIC DNA]</scope>
    <source>
        <strain>ATCC 27750 / DSM 3376 / VPI C15-48 / C15-B4</strain>
    </source>
</reference>
<evidence type="ECO:0000255" key="1">
    <source>
        <dbReference type="HAMAP-Rule" id="MF_00318"/>
    </source>
</evidence>
<accession>C4Z1M9</accession>
<feature type="chain" id="PRO_1000205093" description="Enolase">
    <location>
        <begin position="1"/>
        <end position="435"/>
    </location>
</feature>
<feature type="active site" description="Proton donor" evidence="1">
    <location>
        <position position="209"/>
    </location>
</feature>
<feature type="active site" description="Proton acceptor" evidence="1">
    <location>
        <position position="344"/>
    </location>
</feature>
<feature type="binding site" evidence="1">
    <location>
        <position position="167"/>
    </location>
    <ligand>
        <name>(2R)-2-phosphoglycerate</name>
        <dbReference type="ChEBI" id="CHEBI:58289"/>
    </ligand>
</feature>
<feature type="binding site" evidence="1">
    <location>
        <position position="246"/>
    </location>
    <ligand>
        <name>Mg(2+)</name>
        <dbReference type="ChEBI" id="CHEBI:18420"/>
    </ligand>
</feature>
<feature type="binding site" evidence="1">
    <location>
        <position position="292"/>
    </location>
    <ligand>
        <name>Mg(2+)</name>
        <dbReference type="ChEBI" id="CHEBI:18420"/>
    </ligand>
</feature>
<feature type="binding site" evidence="1">
    <location>
        <position position="319"/>
    </location>
    <ligand>
        <name>Mg(2+)</name>
        <dbReference type="ChEBI" id="CHEBI:18420"/>
    </ligand>
</feature>
<feature type="binding site" evidence="1">
    <location>
        <position position="344"/>
    </location>
    <ligand>
        <name>(2R)-2-phosphoglycerate</name>
        <dbReference type="ChEBI" id="CHEBI:58289"/>
    </ligand>
</feature>
<feature type="binding site" evidence="1">
    <location>
        <position position="373"/>
    </location>
    <ligand>
        <name>(2R)-2-phosphoglycerate</name>
        <dbReference type="ChEBI" id="CHEBI:58289"/>
    </ligand>
</feature>
<feature type="binding site" evidence="1">
    <location>
        <position position="374"/>
    </location>
    <ligand>
        <name>(2R)-2-phosphoglycerate</name>
        <dbReference type="ChEBI" id="CHEBI:58289"/>
    </ligand>
</feature>
<feature type="binding site" evidence="1">
    <location>
        <position position="395"/>
    </location>
    <ligand>
        <name>(2R)-2-phosphoglycerate</name>
        <dbReference type="ChEBI" id="CHEBI:58289"/>
    </ligand>
</feature>
<organism>
    <name type="scientific">Lachnospira eligens (strain ATCC 27750 / DSM 3376 / VPI C15-48 / C15-B4)</name>
    <name type="common">Eubacterium eligens</name>
    <dbReference type="NCBI Taxonomy" id="515620"/>
    <lineage>
        <taxon>Bacteria</taxon>
        <taxon>Bacillati</taxon>
        <taxon>Bacillota</taxon>
        <taxon>Clostridia</taxon>
        <taxon>Lachnospirales</taxon>
        <taxon>Lachnospiraceae</taxon>
        <taxon>Lachnospira</taxon>
    </lineage>
</organism>
<gene>
    <name evidence="1" type="primary">eno</name>
    <name type="ordered locus">EUBELI_01395</name>
</gene>
<name>ENO_LACE2</name>
<dbReference type="EC" id="4.2.1.11" evidence="1"/>
<dbReference type="EMBL" id="CP001104">
    <property type="protein sequence ID" value="ACR72390.1"/>
    <property type="molecule type" value="Genomic_DNA"/>
</dbReference>
<dbReference type="RefSeq" id="WP_012739625.1">
    <property type="nucleotide sequence ID" value="NC_012778.1"/>
</dbReference>
<dbReference type="SMR" id="C4Z1M9"/>
<dbReference type="STRING" id="515620.EUBELI_01395"/>
<dbReference type="GeneID" id="41356102"/>
<dbReference type="KEGG" id="eel:EUBELI_01395"/>
<dbReference type="eggNOG" id="COG0148">
    <property type="taxonomic scope" value="Bacteria"/>
</dbReference>
<dbReference type="HOGENOM" id="CLU_031223_2_1_9"/>
<dbReference type="UniPathway" id="UPA00109">
    <property type="reaction ID" value="UER00187"/>
</dbReference>
<dbReference type="Proteomes" id="UP000001476">
    <property type="component" value="Chromosome"/>
</dbReference>
<dbReference type="GO" id="GO:0009986">
    <property type="term" value="C:cell surface"/>
    <property type="evidence" value="ECO:0007669"/>
    <property type="project" value="UniProtKB-SubCell"/>
</dbReference>
<dbReference type="GO" id="GO:0005576">
    <property type="term" value="C:extracellular region"/>
    <property type="evidence" value="ECO:0007669"/>
    <property type="project" value="UniProtKB-SubCell"/>
</dbReference>
<dbReference type="GO" id="GO:0000015">
    <property type="term" value="C:phosphopyruvate hydratase complex"/>
    <property type="evidence" value="ECO:0007669"/>
    <property type="project" value="InterPro"/>
</dbReference>
<dbReference type="GO" id="GO:0000287">
    <property type="term" value="F:magnesium ion binding"/>
    <property type="evidence" value="ECO:0007669"/>
    <property type="project" value="UniProtKB-UniRule"/>
</dbReference>
<dbReference type="GO" id="GO:0004634">
    <property type="term" value="F:phosphopyruvate hydratase activity"/>
    <property type="evidence" value="ECO:0007669"/>
    <property type="project" value="UniProtKB-UniRule"/>
</dbReference>
<dbReference type="GO" id="GO:0006096">
    <property type="term" value="P:glycolytic process"/>
    <property type="evidence" value="ECO:0007669"/>
    <property type="project" value="UniProtKB-UniRule"/>
</dbReference>
<dbReference type="CDD" id="cd03313">
    <property type="entry name" value="enolase"/>
    <property type="match status" value="1"/>
</dbReference>
<dbReference type="FunFam" id="3.20.20.120:FF:000001">
    <property type="entry name" value="Enolase"/>
    <property type="match status" value="1"/>
</dbReference>
<dbReference type="FunFam" id="3.30.390.10:FF:000001">
    <property type="entry name" value="Enolase"/>
    <property type="match status" value="1"/>
</dbReference>
<dbReference type="Gene3D" id="3.20.20.120">
    <property type="entry name" value="Enolase-like C-terminal domain"/>
    <property type="match status" value="1"/>
</dbReference>
<dbReference type="Gene3D" id="3.30.390.10">
    <property type="entry name" value="Enolase-like, N-terminal domain"/>
    <property type="match status" value="1"/>
</dbReference>
<dbReference type="HAMAP" id="MF_00318">
    <property type="entry name" value="Enolase"/>
    <property type="match status" value="1"/>
</dbReference>
<dbReference type="InterPro" id="IPR000941">
    <property type="entry name" value="Enolase"/>
</dbReference>
<dbReference type="InterPro" id="IPR036849">
    <property type="entry name" value="Enolase-like_C_sf"/>
</dbReference>
<dbReference type="InterPro" id="IPR029017">
    <property type="entry name" value="Enolase-like_N"/>
</dbReference>
<dbReference type="InterPro" id="IPR020810">
    <property type="entry name" value="Enolase_C"/>
</dbReference>
<dbReference type="InterPro" id="IPR020809">
    <property type="entry name" value="Enolase_CS"/>
</dbReference>
<dbReference type="InterPro" id="IPR020811">
    <property type="entry name" value="Enolase_N"/>
</dbReference>
<dbReference type="NCBIfam" id="TIGR01060">
    <property type="entry name" value="eno"/>
    <property type="match status" value="1"/>
</dbReference>
<dbReference type="PANTHER" id="PTHR11902">
    <property type="entry name" value="ENOLASE"/>
    <property type="match status" value="1"/>
</dbReference>
<dbReference type="PANTHER" id="PTHR11902:SF1">
    <property type="entry name" value="ENOLASE"/>
    <property type="match status" value="1"/>
</dbReference>
<dbReference type="Pfam" id="PF00113">
    <property type="entry name" value="Enolase_C"/>
    <property type="match status" value="1"/>
</dbReference>
<dbReference type="Pfam" id="PF03952">
    <property type="entry name" value="Enolase_N"/>
    <property type="match status" value="1"/>
</dbReference>
<dbReference type="PIRSF" id="PIRSF001400">
    <property type="entry name" value="Enolase"/>
    <property type="match status" value="1"/>
</dbReference>
<dbReference type="PRINTS" id="PR00148">
    <property type="entry name" value="ENOLASE"/>
</dbReference>
<dbReference type="SFLD" id="SFLDS00001">
    <property type="entry name" value="Enolase"/>
    <property type="match status" value="1"/>
</dbReference>
<dbReference type="SFLD" id="SFLDF00002">
    <property type="entry name" value="enolase"/>
    <property type="match status" value="1"/>
</dbReference>
<dbReference type="SMART" id="SM01192">
    <property type="entry name" value="Enolase_C"/>
    <property type="match status" value="1"/>
</dbReference>
<dbReference type="SMART" id="SM01193">
    <property type="entry name" value="Enolase_N"/>
    <property type="match status" value="1"/>
</dbReference>
<dbReference type="SUPFAM" id="SSF51604">
    <property type="entry name" value="Enolase C-terminal domain-like"/>
    <property type="match status" value="1"/>
</dbReference>
<dbReference type="SUPFAM" id="SSF54826">
    <property type="entry name" value="Enolase N-terminal domain-like"/>
    <property type="match status" value="1"/>
</dbReference>
<dbReference type="PROSITE" id="PS00164">
    <property type="entry name" value="ENOLASE"/>
    <property type="match status" value="1"/>
</dbReference>
<protein>
    <recommendedName>
        <fullName evidence="1">Enolase</fullName>
        <ecNumber evidence="1">4.2.1.11</ecNumber>
    </recommendedName>
    <alternativeName>
        <fullName evidence="1">2-phospho-D-glycerate hydro-lyase</fullName>
    </alternativeName>
    <alternativeName>
        <fullName evidence="1">2-phosphoglycerate dehydratase</fullName>
    </alternativeName>
</protein>
<sequence>MAAYLEIEKVIGREILDSRGNPTVEAEVYLADGTVGRGAAPSGASTGEFEALELRDKDKSRYLGKGVTKAVENINTVINDCLFGIDASDIYAVDAAMIKADGTKDKSNLGANAILAVSIAAARAASVSLDIPLYRFLGGVSGNRLPVPMMNIINGGCHALSSGLDVQEFMIMPVGAPSFKECLRWCAEVFHALAAILKERGLATSVGDEGGFAPALKSDEEAIETILQAVEKAGYKPGRDFRIAMDAASSEWKSEKGKGYYKLPKAGTEYTAEELIEHWAKLCEKYPIISIEDGLDEEDWEGWKKLTDRLGDKVQLVGDDLFVTNTERLSKGIELGAGNAILIKLNQIGSVSETLEAIKMAHKAGYTAISSHRSGETADTTIADLAVALNTCQIKTGAPSRSERVAKYNQLLRIEEQLGASAVYPGIRAFNVNND</sequence>